<organism>
    <name type="scientific">Mus musculus</name>
    <name type="common">Mouse</name>
    <dbReference type="NCBI Taxonomy" id="10090"/>
    <lineage>
        <taxon>Eukaryota</taxon>
        <taxon>Metazoa</taxon>
        <taxon>Chordata</taxon>
        <taxon>Craniata</taxon>
        <taxon>Vertebrata</taxon>
        <taxon>Euteleostomi</taxon>
        <taxon>Mammalia</taxon>
        <taxon>Eutheria</taxon>
        <taxon>Euarchontoglires</taxon>
        <taxon>Glires</taxon>
        <taxon>Rodentia</taxon>
        <taxon>Myomorpha</taxon>
        <taxon>Muroidea</taxon>
        <taxon>Muridae</taxon>
        <taxon>Murinae</taxon>
        <taxon>Mus</taxon>
        <taxon>Mus</taxon>
    </lineage>
</organism>
<keyword id="KW-0967">Endosome</keyword>
<keyword id="KW-0445">Lipid transport</keyword>
<keyword id="KW-0446">Lipid-binding</keyword>
<keyword id="KW-0472">Membrane</keyword>
<keyword id="KW-0597">Phosphoprotein</keyword>
<keyword id="KW-1185">Reference proteome</keyword>
<keyword id="KW-0812">Transmembrane</keyword>
<keyword id="KW-1133">Transmembrane helix</keyword>
<keyword id="KW-0813">Transport</keyword>
<gene>
    <name evidence="6" type="primary">Stard3</name>
    <name evidence="6" type="synonym">Es64</name>
    <name evidence="1" type="synonym">Mln64</name>
</gene>
<accession>Q61542</accession>
<dbReference type="EMBL" id="X82457">
    <property type="protein sequence ID" value="CAA57834.1"/>
    <property type="molecule type" value="mRNA"/>
</dbReference>
<dbReference type="EMBL" id="BC003313">
    <property type="protein sequence ID" value="AAH03313.1"/>
    <property type="molecule type" value="mRNA"/>
</dbReference>
<dbReference type="CCDS" id="CCDS25345.1"/>
<dbReference type="RefSeq" id="NP_001412567.1">
    <property type="nucleotide sequence ID" value="NM_001425638.1"/>
</dbReference>
<dbReference type="RefSeq" id="NP_067522.1">
    <property type="nucleotide sequence ID" value="NM_021547.4"/>
</dbReference>
<dbReference type="RefSeq" id="XP_006533959.1">
    <property type="nucleotide sequence ID" value="XM_006533896.3"/>
</dbReference>
<dbReference type="SMR" id="Q61542"/>
<dbReference type="BioGRID" id="208509">
    <property type="interactions" value="1"/>
</dbReference>
<dbReference type="FunCoup" id="Q61542">
    <property type="interactions" value="3797"/>
</dbReference>
<dbReference type="STRING" id="10090.ENSMUSP00000018311"/>
<dbReference type="ChEMBL" id="CHEMBL4523333"/>
<dbReference type="GlyGen" id="Q61542">
    <property type="glycosylation" value="1 site, 1 O-linked glycan (1 site)"/>
</dbReference>
<dbReference type="iPTMnet" id="Q61542"/>
<dbReference type="PhosphoSitePlus" id="Q61542"/>
<dbReference type="PaxDb" id="10090-ENSMUSP00000018311"/>
<dbReference type="ProteomicsDB" id="257448"/>
<dbReference type="Antibodypedia" id="28306">
    <property type="antibodies" value="77 antibodies from 23 providers"/>
</dbReference>
<dbReference type="DNASU" id="59045"/>
<dbReference type="Ensembl" id="ENSMUST00000018311.5">
    <property type="protein sequence ID" value="ENSMUSP00000018311.5"/>
    <property type="gene ID" value="ENSMUSG00000018167.11"/>
</dbReference>
<dbReference type="GeneID" id="59045"/>
<dbReference type="KEGG" id="mmu:59045"/>
<dbReference type="UCSC" id="uc007lgc.2">
    <property type="organism name" value="mouse"/>
</dbReference>
<dbReference type="AGR" id="MGI:1929618"/>
<dbReference type="CTD" id="10948"/>
<dbReference type="MGI" id="MGI:1929618">
    <property type="gene designation" value="Stard3"/>
</dbReference>
<dbReference type="VEuPathDB" id="HostDB:ENSMUSG00000018167"/>
<dbReference type="eggNOG" id="KOG3845">
    <property type="taxonomic scope" value="Eukaryota"/>
</dbReference>
<dbReference type="GeneTree" id="ENSGT00940000159051"/>
<dbReference type="HOGENOM" id="CLU_033480_0_0_1"/>
<dbReference type="InParanoid" id="Q61542"/>
<dbReference type="OMA" id="AYHMQYD"/>
<dbReference type="OrthoDB" id="5912992at2759"/>
<dbReference type="PhylomeDB" id="Q61542"/>
<dbReference type="TreeFam" id="TF313869"/>
<dbReference type="Reactome" id="R-MMU-196108">
    <property type="pathway name" value="Pregnenolone biosynthesis"/>
</dbReference>
<dbReference type="BioGRID-ORCS" id="59045">
    <property type="hits" value="6 hits in 79 CRISPR screens"/>
</dbReference>
<dbReference type="ChiTaRS" id="Stard3">
    <property type="organism name" value="mouse"/>
</dbReference>
<dbReference type="PRO" id="PR:Q61542"/>
<dbReference type="Proteomes" id="UP000000589">
    <property type="component" value="Chromosome 11"/>
</dbReference>
<dbReference type="RNAct" id="Q61542">
    <property type="molecule type" value="protein"/>
</dbReference>
<dbReference type="Bgee" id="ENSMUSG00000018167">
    <property type="expression patterns" value="Expressed in granulocyte and 259 other cell types or tissues"/>
</dbReference>
<dbReference type="ExpressionAtlas" id="Q61542">
    <property type="expression patterns" value="baseline and differential"/>
</dbReference>
<dbReference type="GO" id="GO:0005737">
    <property type="term" value="C:cytoplasm"/>
    <property type="evidence" value="ECO:0000250"/>
    <property type="project" value="MGI"/>
</dbReference>
<dbReference type="GO" id="GO:0005789">
    <property type="term" value="C:endoplasmic reticulum membrane"/>
    <property type="evidence" value="ECO:0007669"/>
    <property type="project" value="Ensembl"/>
</dbReference>
<dbReference type="GO" id="GO:0140284">
    <property type="term" value="C:endoplasmic reticulum-endosome membrane contact site"/>
    <property type="evidence" value="ECO:0000250"/>
    <property type="project" value="UniProtKB"/>
</dbReference>
<dbReference type="GO" id="GO:0005768">
    <property type="term" value="C:endosome"/>
    <property type="evidence" value="ECO:0000314"/>
    <property type="project" value="MGI"/>
</dbReference>
<dbReference type="GO" id="GO:0005770">
    <property type="term" value="C:late endosome"/>
    <property type="evidence" value="ECO:0000304"/>
    <property type="project" value="MGI"/>
</dbReference>
<dbReference type="GO" id="GO:0031902">
    <property type="term" value="C:late endosome membrane"/>
    <property type="evidence" value="ECO:0000250"/>
    <property type="project" value="UniProtKB"/>
</dbReference>
<dbReference type="GO" id="GO:0005739">
    <property type="term" value="C:mitochondrion"/>
    <property type="evidence" value="ECO:0000314"/>
    <property type="project" value="MGI"/>
</dbReference>
<dbReference type="GO" id="GO:0005654">
    <property type="term" value="C:nucleoplasm"/>
    <property type="evidence" value="ECO:0007669"/>
    <property type="project" value="Ensembl"/>
</dbReference>
<dbReference type="GO" id="GO:0044232">
    <property type="term" value="C:organelle membrane contact site"/>
    <property type="evidence" value="ECO:0000250"/>
    <property type="project" value="UniProtKB"/>
</dbReference>
<dbReference type="GO" id="GO:0015485">
    <property type="term" value="F:cholesterol binding"/>
    <property type="evidence" value="ECO:0000250"/>
    <property type="project" value="UniProtKB"/>
</dbReference>
<dbReference type="GO" id="GO:0120020">
    <property type="term" value="F:cholesterol transfer activity"/>
    <property type="evidence" value="ECO:0007669"/>
    <property type="project" value="InterPro"/>
</dbReference>
<dbReference type="GO" id="GO:0042803">
    <property type="term" value="F:protein homodimerization activity"/>
    <property type="evidence" value="ECO:0000250"/>
    <property type="project" value="UniProtKB"/>
</dbReference>
<dbReference type="GO" id="GO:0030301">
    <property type="term" value="P:cholesterol transport"/>
    <property type="evidence" value="ECO:0000250"/>
    <property type="project" value="UniProtKB"/>
</dbReference>
<dbReference type="GO" id="GO:0006701">
    <property type="term" value="P:progesterone biosynthetic process"/>
    <property type="evidence" value="ECO:0000315"/>
    <property type="project" value="MGI"/>
</dbReference>
<dbReference type="GO" id="GO:0099044">
    <property type="term" value="P:vesicle tethering to endoplasmic reticulum"/>
    <property type="evidence" value="ECO:0000250"/>
    <property type="project" value="UniProtKB"/>
</dbReference>
<dbReference type="CDD" id="cd08906">
    <property type="entry name" value="START_STARD3-like"/>
    <property type="match status" value="1"/>
</dbReference>
<dbReference type="FunFam" id="3.30.530.20:FF:000014">
    <property type="entry name" value="stAR-related lipid transfer protein 3 isoform X2"/>
    <property type="match status" value="1"/>
</dbReference>
<dbReference type="Gene3D" id="3.30.530.20">
    <property type="match status" value="1"/>
</dbReference>
<dbReference type="InterPro" id="IPR019498">
    <property type="entry name" value="MENTAL"/>
</dbReference>
<dbReference type="InterPro" id="IPR000799">
    <property type="entry name" value="StAR-like"/>
</dbReference>
<dbReference type="InterPro" id="IPR051869">
    <property type="entry name" value="STARD3"/>
</dbReference>
<dbReference type="InterPro" id="IPR029867">
    <property type="entry name" value="STARD3_MLN64_C"/>
</dbReference>
<dbReference type="InterPro" id="IPR023393">
    <property type="entry name" value="START-like_dom_sf"/>
</dbReference>
<dbReference type="InterPro" id="IPR002913">
    <property type="entry name" value="START_lipid-bd_dom"/>
</dbReference>
<dbReference type="PANTHER" id="PTHR46121:SF2">
    <property type="entry name" value="STAR-RELATED LIPID TRANSFER PROTEIN 3"/>
    <property type="match status" value="1"/>
</dbReference>
<dbReference type="PANTHER" id="PTHR46121">
    <property type="entry name" value="STEROIDOGENIC ACUTE REGULATORY PROTEIN-LIKE"/>
    <property type="match status" value="1"/>
</dbReference>
<dbReference type="Pfam" id="PF10457">
    <property type="entry name" value="MENTAL"/>
    <property type="match status" value="1"/>
</dbReference>
<dbReference type="Pfam" id="PF01852">
    <property type="entry name" value="START"/>
    <property type="match status" value="1"/>
</dbReference>
<dbReference type="PRINTS" id="PR00978">
    <property type="entry name" value="STARPROTEIN"/>
</dbReference>
<dbReference type="SMART" id="SM00234">
    <property type="entry name" value="START"/>
    <property type="match status" value="1"/>
</dbReference>
<dbReference type="SUPFAM" id="SSF55961">
    <property type="entry name" value="Bet v1-like"/>
    <property type="match status" value="1"/>
</dbReference>
<dbReference type="PROSITE" id="PS51439">
    <property type="entry name" value="MENTAL"/>
    <property type="match status" value="1"/>
</dbReference>
<dbReference type="PROSITE" id="PS50848">
    <property type="entry name" value="START"/>
    <property type="match status" value="1"/>
</dbReference>
<name>STAR3_MOUSE</name>
<comment type="function">
    <text evidence="1">Sterol-binding protein that mediates cholesterol transport from the endoplasmic reticulum to endosomes. The sterol transport mechanism is triggered by phosphorylation of FFAT motif that leads to membrane tethering between the endoplasmic reticulum and late endosomes via interaction with VAPA and VAPB. Acts as a lipid transfer protein that redirects sterol to the endosome at the expense of the cell membrane and favors membrane formation inside endosomes. May also mediate cholesterol transport between other membranes, such as mitochondria membrane or cell membrane. However, such results need additional experimental evidences; probably mainly mediates cholesterol transport from the endoplasmic reticulum to endosomes. Does not activate transcriptional cholesterol sensing. Able to bind other lipids, such as lutein, a xanthophyll carotenoids that form the macular pigment of the retina.</text>
</comment>
<comment type="catalytic activity">
    <reaction evidence="1">
        <text>cholesterol(in) = cholesterol(out)</text>
        <dbReference type="Rhea" id="RHEA:39747"/>
        <dbReference type="ChEBI" id="CHEBI:16113"/>
    </reaction>
</comment>
<comment type="subunit">
    <text evidence="1">Homodimer. Interacts (via the MENTAL domain) with STARD3NL. Interacts (via phosphorylated FFAT motif) with VAPA (via MSP domain). Interacts (via phosphorylated FFAT motif) with VAPB (via MSP domain). Interacts (via phosphorylated FFAT motif) with MOSPD2 (via MSP domain); this interaction allows enrichment of MOSPD2 around endosomes.</text>
</comment>
<comment type="subcellular location">
    <subcellularLocation>
        <location evidence="1">Late endosome membrane</location>
        <topology evidence="2">Multi-pass membrane protein</topology>
    </subcellularLocation>
    <text evidence="1">Localizes to contact sites between the endoplasmic reticulum and late endosomes: associates with the endoplasmic reticulum membrane via interaction with VAPA, VAPB or MOSPD2.</text>
</comment>
<comment type="domain">
    <text evidence="1">The FFAT motif mediates interaction with VAPA, VAPB and MOSPD2.</text>
</comment>
<comment type="domain">
    <text evidence="1">The START domain mediates lipid-transfer between membranes. It contains a hydrophobic cavity able to accommodate one lipid molecule, thereby serving as a 'hydrophobic bridge' across the aqueous gap between donor and acceptor organelle membranes.</text>
</comment>
<comment type="domain">
    <text evidence="1">The MENTAL domain anchors the protein in endosome membranes and exposes the START domain in the cytosol. It binds cholesterol and mediates homotypic as well as heterotypic interactions between STARD3 and STARD3NL.</text>
</comment>
<comment type="PTM">
    <text evidence="1">Phosphorylation at Ser-210 is necessary and sufficient for the direct interaction of the phosphorylated FFAT motif with the MSP domain of MOSPD2, VAPA and VAPB and allows the tethering of two membranes that participates in the formation of ER-endosome contacts. Phosphorylation of the FFAT motif leads to conformation changes. Additional phosphorylations around the core FFAT motif (QFYSPPE) are not essential but strengthen the interaction with MOSPD2, VAPA and VAPB. Phosphorylation at Ser-210 of FFAT motif drives membrane tethering between the endoplasmic reticulum and late endosomes via interaction with VAPA and VAPB that in turn allows the efficient transport of sterol mediated by the START domain.</text>
</comment>
<comment type="similarity">
    <text evidence="5">Belongs to the STARD3 family.</text>
</comment>
<proteinExistence type="evidence at protein level"/>
<evidence type="ECO:0000250" key="1">
    <source>
        <dbReference type="UniProtKB" id="Q14849"/>
    </source>
</evidence>
<evidence type="ECO:0000255" key="2"/>
<evidence type="ECO:0000255" key="3">
    <source>
        <dbReference type="PROSITE-ProRule" id="PRU00197"/>
    </source>
</evidence>
<evidence type="ECO:0000255" key="4">
    <source>
        <dbReference type="PROSITE-ProRule" id="PRU00770"/>
    </source>
</evidence>
<evidence type="ECO:0000305" key="5"/>
<evidence type="ECO:0000312" key="6">
    <source>
        <dbReference type="MGI" id="MGI:1929618"/>
    </source>
</evidence>
<evidence type="ECO:0007744" key="7">
    <source>
    </source>
</evidence>
<protein>
    <recommendedName>
        <fullName evidence="5">StAR-related lipid transfer protein 3</fullName>
    </recommendedName>
    <alternativeName>
        <fullName evidence="6">Protein ES 64</fullName>
    </alternativeName>
    <alternativeName>
        <fullName evidence="1">Protein MLN 64</fullName>
    </alternativeName>
    <alternativeName>
        <fullName evidence="6">START domain-containing protein 3</fullName>
        <shortName evidence="6">StARD3</shortName>
    </alternativeName>
</protein>
<sequence>MSKRPGDLACDLERSLPALASLGTSLSHSQSLSSHFIPPPLEKRRAISDVRRTFCLFVTFDLLFISLLWIIELNTNTGIRKNLEQEVIHYSFQSSFFDIFVLAFFRFSGLLLGYAVLRLQHWWVIAVTTLVSSAFLIVKVILSELLSKGAFGYLLPIVSFVLAWLETWFLDFKVLPQEAEEERWYLAAQAAVARGPLLFSGALSEGQFYSPPESFAGSDNESDEEVTGKKSFSAQEREYIRQGKEATAVVDQILAQEENWKFERSNEYGDTVYTIEVPFHGKTFILKTFLPCPAELVYQEVILQPERMVLWNKTVTACQILQRVEDNTLVSYDVSSGAAGGVVSPRDFVNVRRIERRRDRYLSSGIATTHCSKPPTHKYVRGENGPGGFIVLKSANNPRVCTFVWILNTDLKGRLPRYLIHQSLGATMFEFAFHLRQRVGELGARA</sequence>
<feature type="chain" id="PRO_0000220654" description="StAR-related lipid transfer protein 3">
    <location>
        <begin position="1"/>
        <end position="446"/>
    </location>
</feature>
<feature type="topological domain" description="Cytoplasmic" evidence="1">
    <location>
        <begin position="1"/>
        <end position="52"/>
    </location>
</feature>
<feature type="transmembrane region" description="Helical" evidence="4">
    <location>
        <begin position="53"/>
        <end position="73"/>
    </location>
</feature>
<feature type="topological domain" description="Extracellular" evidence="2">
    <location>
        <begin position="74"/>
        <end position="95"/>
    </location>
</feature>
<feature type="transmembrane region" description="Helical" evidence="4">
    <location>
        <begin position="96"/>
        <end position="116"/>
    </location>
</feature>
<feature type="topological domain" description="Cytoplasmic" evidence="2">
    <location>
        <begin position="117"/>
        <end position="121"/>
    </location>
</feature>
<feature type="transmembrane region" description="Helical" evidence="4">
    <location>
        <begin position="122"/>
        <end position="142"/>
    </location>
</feature>
<feature type="topological domain" description="Extracellular" evidence="2">
    <location>
        <begin position="143"/>
        <end position="149"/>
    </location>
</feature>
<feature type="transmembrane region" description="Helical" evidence="4">
    <location>
        <begin position="150"/>
        <end position="170"/>
    </location>
</feature>
<feature type="topological domain" description="Cytoplasmic" evidence="1">
    <location>
        <begin position="171"/>
        <end position="446"/>
    </location>
</feature>
<feature type="domain" description="MENTAL" evidence="4">
    <location>
        <begin position="47"/>
        <end position="218"/>
    </location>
</feature>
<feature type="domain" description="START" evidence="3">
    <location>
        <begin position="231"/>
        <end position="444"/>
    </location>
</feature>
<feature type="short sequence motif" description="FFAT" evidence="1">
    <location>
        <begin position="207"/>
        <end position="213"/>
    </location>
</feature>
<feature type="modified residue" description="Phosphoserine" evidence="7">
    <location>
        <position position="210"/>
    </location>
</feature>
<feature type="modified residue" description="Phosphoserine" evidence="7">
    <location>
        <position position="218"/>
    </location>
</feature>
<feature type="modified residue" description="Phosphoserine" evidence="7">
    <location>
        <position position="222"/>
    </location>
</feature>
<reference key="1">
    <citation type="journal article" date="1995" name="Genomics">
        <title>Identification of four novel human genes amplified and overexpressed in breast carcinoma and localized to the q11-q21.3 region of chromosome 17.</title>
        <authorList>
            <person name="Tomasetto C.L."/>
            <person name="Regnier C.H."/>
            <person name="Moog-Lutz C."/>
            <person name="Mattei M.-G."/>
            <person name="Chenard M.-P."/>
            <person name="Lidereau R."/>
            <person name="Basset P."/>
            <person name="Rio M.-C."/>
        </authorList>
    </citation>
    <scope>NUCLEOTIDE SEQUENCE [MRNA]</scope>
</reference>
<reference key="2">
    <citation type="journal article" date="2004" name="Genome Res.">
        <title>The status, quality, and expansion of the NIH full-length cDNA project: the Mammalian Gene Collection (MGC).</title>
        <authorList>
            <consortium name="The MGC Project Team"/>
        </authorList>
    </citation>
    <scope>NUCLEOTIDE SEQUENCE [LARGE SCALE MRNA]</scope>
    <source>
        <tissue>Mammary tumor</tissue>
    </source>
</reference>
<reference key="3">
    <citation type="journal article" date="2010" name="Cell">
        <title>A tissue-specific atlas of mouse protein phosphorylation and expression.</title>
        <authorList>
            <person name="Huttlin E.L."/>
            <person name="Jedrychowski M.P."/>
            <person name="Elias J.E."/>
            <person name="Goswami T."/>
            <person name="Rad R."/>
            <person name="Beausoleil S.A."/>
            <person name="Villen J."/>
            <person name="Haas W."/>
            <person name="Sowa M.E."/>
            <person name="Gygi S.P."/>
        </authorList>
    </citation>
    <scope>PHOSPHORYLATION [LARGE SCALE ANALYSIS] AT SER-210; SER-218 AND SER-222</scope>
    <scope>IDENTIFICATION BY MASS SPECTROMETRY [LARGE SCALE ANALYSIS]</scope>
    <source>
        <tissue>Spleen</tissue>
        <tissue>Testis</tissue>
    </source>
</reference>